<dbReference type="EC" id="2.3.1.89" evidence="1"/>
<dbReference type="EMBL" id="AP008934">
    <property type="protein sequence ID" value="BAE18498.1"/>
    <property type="molecule type" value="Genomic_DNA"/>
</dbReference>
<dbReference type="RefSeq" id="WP_011303132.1">
    <property type="nucleotide sequence ID" value="NC_007350.1"/>
</dbReference>
<dbReference type="SMR" id="Q49XJ9"/>
<dbReference type="GeneID" id="3616691"/>
<dbReference type="KEGG" id="ssp:SSP1353"/>
<dbReference type="PATRIC" id="fig|342451.11.peg.1357"/>
<dbReference type="eggNOG" id="COG2171">
    <property type="taxonomic scope" value="Bacteria"/>
</dbReference>
<dbReference type="HOGENOM" id="CLU_103751_0_0_9"/>
<dbReference type="OrthoDB" id="9788080at2"/>
<dbReference type="UniPathway" id="UPA00034">
    <property type="reaction ID" value="UER00022"/>
</dbReference>
<dbReference type="Proteomes" id="UP000006371">
    <property type="component" value="Chromosome"/>
</dbReference>
<dbReference type="GO" id="GO:0047200">
    <property type="term" value="F:tetrahydrodipicolinate N-acetyltransferase activity"/>
    <property type="evidence" value="ECO:0007669"/>
    <property type="project" value="UniProtKB-EC"/>
</dbReference>
<dbReference type="GO" id="GO:0019877">
    <property type="term" value="P:diaminopimelate biosynthetic process"/>
    <property type="evidence" value="ECO:0007669"/>
    <property type="project" value="UniProtKB-UniRule"/>
</dbReference>
<dbReference type="GO" id="GO:0009089">
    <property type="term" value="P:lysine biosynthetic process via diaminopimelate"/>
    <property type="evidence" value="ECO:0007669"/>
    <property type="project" value="UniProtKB-UniRule"/>
</dbReference>
<dbReference type="Gene3D" id="2.160.10.10">
    <property type="entry name" value="Hexapeptide repeat proteins"/>
    <property type="match status" value="1"/>
</dbReference>
<dbReference type="Gene3D" id="3.30.70.250">
    <property type="entry name" value="Malonyl-CoA ACP transacylase, ACP-binding"/>
    <property type="match status" value="1"/>
</dbReference>
<dbReference type="HAMAP" id="MF_01691">
    <property type="entry name" value="DapH"/>
    <property type="match status" value="1"/>
</dbReference>
<dbReference type="InterPro" id="IPR019873">
    <property type="entry name" value="DapH"/>
</dbReference>
<dbReference type="InterPro" id="IPR013710">
    <property type="entry name" value="DapH_N"/>
</dbReference>
<dbReference type="InterPro" id="IPR001451">
    <property type="entry name" value="Hexapep"/>
</dbReference>
<dbReference type="InterPro" id="IPR018357">
    <property type="entry name" value="Hexapep_transf_CS"/>
</dbReference>
<dbReference type="InterPro" id="IPR050179">
    <property type="entry name" value="Trans_hexapeptide_repeat"/>
</dbReference>
<dbReference type="InterPro" id="IPR011004">
    <property type="entry name" value="Trimer_LpxA-like_sf"/>
</dbReference>
<dbReference type="NCBIfam" id="TIGR03532">
    <property type="entry name" value="DapD_Ac"/>
    <property type="match status" value="1"/>
</dbReference>
<dbReference type="PANTHER" id="PTHR43300:SF10">
    <property type="entry name" value="2,3,4,5-TETRAHYDROPYRIDINE-2,6-DICARBOXYLATE N-ACETYLTRANSFERASE"/>
    <property type="match status" value="1"/>
</dbReference>
<dbReference type="PANTHER" id="PTHR43300">
    <property type="entry name" value="ACETYLTRANSFERASE"/>
    <property type="match status" value="1"/>
</dbReference>
<dbReference type="Pfam" id="PF08503">
    <property type="entry name" value="DapH_N"/>
    <property type="match status" value="1"/>
</dbReference>
<dbReference type="Pfam" id="PF14602">
    <property type="entry name" value="Hexapep_2"/>
    <property type="match status" value="1"/>
</dbReference>
<dbReference type="SUPFAM" id="SSF51161">
    <property type="entry name" value="Trimeric LpxA-like enzymes"/>
    <property type="match status" value="1"/>
</dbReference>
<dbReference type="PROSITE" id="PS00101">
    <property type="entry name" value="HEXAPEP_TRANSFERASES"/>
    <property type="match status" value="1"/>
</dbReference>
<protein>
    <recommendedName>
        <fullName evidence="1">2,3,4,5-tetrahydropyridine-2,6-dicarboxylate N-acetyltransferase</fullName>
        <ecNumber evidence="1">2.3.1.89</ecNumber>
    </recommendedName>
    <alternativeName>
        <fullName evidence="1">Tetrahydrodipicolinate N-acetyltransferase</fullName>
        <shortName evidence="1">THP acetyltransferase</shortName>
        <shortName evidence="1">Tetrahydropicolinate acetylase</shortName>
    </alternativeName>
</protein>
<accession>Q49XJ9</accession>
<reference key="1">
    <citation type="journal article" date="2005" name="Proc. Natl. Acad. Sci. U.S.A.">
        <title>Whole genome sequence of Staphylococcus saprophyticus reveals the pathogenesis of uncomplicated urinary tract infection.</title>
        <authorList>
            <person name="Kuroda M."/>
            <person name="Yamashita A."/>
            <person name="Hirakawa H."/>
            <person name="Kumano M."/>
            <person name="Morikawa K."/>
            <person name="Higashide M."/>
            <person name="Maruyama A."/>
            <person name="Inose Y."/>
            <person name="Matoba K."/>
            <person name="Toh H."/>
            <person name="Kuhara S."/>
            <person name="Hattori M."/>
            <person name="Ohta T."/>
        </authorList>
    </citation>
    <scope>NUCLEOTIDE SEQUENCE [LARGE SCALE GENOMIC DNA]</scope>
    <source>
        <strain>ATCC 15305 / DSM 20229 / NCIMB 8711 / NCTC 7292 / S-41</strain>
    </source>
</reference>
<gene>
    <name evidence="1" type="primary">dapH</name>
    <name type="ordered locus">SSP1353</name>
</gene>
<keyword id="KW-0012">Acyltransferase</keyword>
<keyword id="KW-0028">Amino-acid biosynthesis</keyword>
<keyword id="KW-0220">Diaminopimelate biosynthesis</keyword>
<keyword id="KW-0457">Lysine biosynthesis</keyword>
<keyword id="KW-1185">Reference proteome</keyword>
<keyword id="KW-0677">Repeat</keyword>
<keyword id="KW-0808">Transferase</keyword>
<organism>
    <name type="scientific">Staphylococcus saprophyticus subsp. saprophyticus (strain ATCC 15305 / DSM 20229 / NCIMB 8711 / NCTC 7292 / S-41)</name>
    <dbReference type="NCBI Taxonomy" id="342451"/>
    <lineage>
        <taxon>Bacteria</taxon>
        <taxon>Bacillati</taxon>
        <taxon>Bacillota</taxon>
        <taxon>Bacilli</taxon>
        <taxon>Bacillales</taxon>
        <taxon>Staphylococcaceae</taxon>
        <taxon>Staphylococcus</taxon>
    </lineage>
</organism>
<evidence type="ECO:0000255" key="1">
    <source>
        <dbReference type="HAMAP-Rule" id="MF_01691"/>
    </source>
</evidence>
<name>DAPH_STAS1</name>
<proteinExistence type="inferred from homology"/>
<comment type="function">
    <text evidence="1">Catalyzes the transfer of an acetyl group from acetyl-CoA to tetrahydrodipicolinate.</text>
</comment>
<comment type="catalytic activity">
    <reaction evidence="1">
        <text>(S)-2,3,4,5-tetrahydrodipicolinate + acetyl-CoA + H2O = L-2-acetamido-6-oxoheptanedioate + CoA</text>
        <dbReference type="Rhea" id="RHEA:13085"/>
        <dbReference type="ChEBI" id="CHEBI:15377"/>
        <dbReference type="ChEBI" id="CHEBI:16845"/>
        <dbReference type="ChEBI" id="CHEBI:57287"/>
        <dbReference type="ChEBI" id="CHEBI:57288"/>
        <dbReference type="ChEBI" id="CHEBI:58117"/>
        <dbReference type="EC" id="2.3.1.89"/>
    </reaction>
</comment>
<comment type="pathway">
    <text evidence="1">Amino-acid biosynthesis; L-lysine biosynthesis via DAP pathway; LL-2,6-diaminopimelate from (S)-tetrahydrodipicolinate (acetylase route): step 1/3.</text>
</comment>
<comment type="similarity">
    <text evidence="1">Belongs to the transferase hexapeptide repeat family. DapH subfamily.</text>
</comment>
<sequence>MVQHLTAEEIIQYISDAKKSTPLKVYINGDFENITFPSDFKVFGSSDSKVIFCEADDWKPFYESNQSVIDEIEVEMDRSNSAIPLKDLTNTNARIEPGAFIREQAIIEDGAVIMMGATINIGAVVGEGTMVDMNATLGGRATTGKNVHVGAGSVLAGVIEPPSASPVVIEDDVLIGANAVILEGVCVGAGAIVAAGAIVTQDVPAGAVVAGTPAKVIKQTTEVEDSKREIVSALRKLND</sequence>
<feature type="chain" id="PRO_0000376705" description="2,3,4,5-tetrahydropyridine-2,6-dicarboxylate N-acetyltransferase">
    <location>
        <begin position="1"/>
        <end position="239"/>
    </location>
</feature>